<reference key="1">
    <citation type="journal article" date="2009" name="BMC Genomics">
        <title>Analysis of the Rickettsia africae genome reveals that virulence acquisition in Rickettsia species may be explained by genome reduction.</title>
        <authorList>
            <person name="Fournier P.-E."/>
            <person name="El Karkouri K."/>
            <person name="Leroy Q."/>
            <person name="Robert C."/>
            <person name="Giumelli B."/>
            <person name="Renesto P."/>
            <person name="Socolovschi C."/>
            <person name="Parola P."/>
            <person name="Audic S."/>
            <person name="Raoult D."/>
        </authorList>
    </citation>
    <scope>NUCLEOTIDE SEQUENCE [LARGE SCALE GENOMIC DNA]</scope>
    <source>
        <strain>ESF-5</strain>
    </source>
</reference>
<name>SYI_RICAE</name>
<protein>
    <recommendedName>
        <fullName evidence="1">Isoleucine--tRNA ligase</fullName>
        <ecNumber evidence="1">6.1.1.5</ecNumber>
    </recommendedName>
    <alternativeName>
        <fullName evidence="1">Isoleucyl-tRNA synthetase</fullName>
        <shortName evidence="1">IleRS</shortName>
    </alternativeName>
</protein>
<dbReference type="EC" id="6.1.1.5" evidence="1"/>
<dbReference type="EMBL" id="CP001612">
    <property type="protein sequence ID" value="ACP53720.1"/>
    <property type="molecule type" value="Genomic_DNA"/>
</dbReference>
<dbReference type="RefSeq" id="WP_012719895.1">
    <property type="nucleotide sequence ID" value="NC_012633.1"/>
</dbReference>
<dbReference type="SMR" id="C3PP60"/>
<dbReference type="KEGG" id="raf:RAF_ORF0859"/>
<dbReference type="HOGENOM" id="CLU_001493_1_1_5"/>
<dbReference type="Proteomes" id="UP000002305">
    <property type="component" value="Chromosome"/>
</dbReference>
<dbReference type="GO" id="GO:0005737">
    <property type="term" value="C:cytoplasm"/>
    <property type="evidence" value="ECO:0007669"/>
    <property type="project" value="UniProtKB-SubCell"/>
</dbReference>
<dbReference type="GO" id="GO:0002161">
    <property type="term" value="F:aminoacyl-tRNA deacylase activity"/>
    <property type="evidence" value="ECO:0007669"/>
    <property type="project" value="InterPro"/>
</dbReference>
<dbReference type="GO" id="GO:0005524">
    <property type="term" value="F:ATP binding"/>
    <property type="evidence" value="ECO:0007669"/>
    <property type="project" value="UniProtKB-UniRule"/>
</dbReference>
<dbReference type="GO" id="GO:0004822">
    <property type="term" value="F:isoleucine-tRNA ligase activity"/>
    <property type="evidence" value="ECO:0007669"/>
    <property type="project" value="UniProtKB-UniRule"/>
</dbReference>
<dbReference type="GO" id="GO:0000049">
    <property type="term" value="F:tRNA binding"/>
    <property type="evidence" value="ECO:0007669"/>
    <property type="project" value="InterPro"/>
</dbReference>
<dbReference type="GO" id="GO:0008270">
    <property type="term" value="F:zinc ion binding"/>
    <property type="evidence" value="ECO:0007669"/>
    <property type="project" value="UniProtKB-UniRule"/>
</dbReference>
<dbReference type="GO" id="GO:0006428">
    <property type="term" value="P:isoleucyl-tRNA aminoacylation"/>
    <property type="evidence" value="ECO:0007669"/>
    <property type="project" value="UniProtKB-UniRule"/>
</dbReference>
<dbReference type="CDD" id="cd07961">
    <property type="entry name" value="Anticodon_Ia_Ile_ABEc"/>
    <property type="match status" value="1"/>
</dbReference>
<dbReference type="CDD" id="cd00818">
    <property type="entry name" value="IleRS_core"/>
    <property type="match status" value="1"/>
</dbReference>
<dbReference type="FunFam" id="3.40.50.620:FF:000075">
    <property type="entry name" value="Isoleucine--tRNA ligase"/>
    <property type="match status" value="1"/>
</dbReference>
<dbReference type="FunFam" id="3.40.50.620:FF:000241">
    <property type="entry name" value="Isoleucine--tRNA ligase"/>
    <property type="match status" value="1"/>
</dbReference>
<dbReference type="Gene3D" id="3.40.50.620">
    <property type="entry name" value="HUPs"/>
    <property type="match status" value="2"/>
</dbReference>
<dbReference type="Gene3D" id="1.10.730.10">
    <property type="entry name" value="Isoleucyl-tRNA Synthetase, Domain 1"/>
    <property type="match status" value="1"/>
</dbReference>
<dbReference type="HAMAP" id="MF_02003">
    <property type="entry name" value="Ile_tRNA_synth_type2"/>
    <property type="match status" value="1"/>
</dbReference>
<dbReference type="InterPro" id="IPR001412">
    <property type="entry name" value="aa-tRNA-synth_I_CS"/>
</dbReference>
<dbReference type="InterPro" id="IPR002300">
    <property type="entry name" value="aa-tRNA-synth_Ia"/>
</dbReference>
<dbReference type="InterPro" id="IPR033709">
    <property type="entry name" value="Anticodon_Ile_ABEc"/>
</dbReference>
<dbReference type="InterPro" id="IPR002301">
    <property type="entry name" value="Ile-tRNA-ligase"/>
</dbReference>
<dbReference type="InterPro" id="IPR023586">
    <property type="entry name" value="Ile-tRNA-ligase_type2"/>
</dbReference>
<dbReference type="InterPro" id="IPR013155">
    <property type="entry name" value="M/V/L/I-tRNA-synth_anticd-bd"/>
</dbReference>
<dbReference type="InterPro" id="IPR014729">
    <property type="entry name" value="Rossmann-like_a/b/a_fold"/>
</dbReference>
<dbReference type="InterPro" id="IPR009080">
    <property type="entry name" value="tRNAsynth_Ia_anticodon-bd"/>
</dbReference>
<dbReference type="InterPro" id="IPR009008">
    <property type="entry name" value="Val/Leu/Ile-tRNA-synth_edit"/>
</dbReference>
<dbReference type="NCBIfam" id="TIGR00392">
    <property type="entry name" value="ileS"/>
    <property type="match status" value="1"/>
</dbReference>
<dbReference type="PANTHER" id="PTHR42780:SF1">
    <property type="entry name" value="ISOLEUCINE--TRNA LIGASE, CYTOPLASMIC"/>
    <property type="match status" value="1"/>
</dbReference>
<dbReference type="PANTHER" id="PTHR42780">
    <property type="entry name" value="SOLEUCYL-TRNA SYNTHETASE"/>
    <property type="match status" value="1"/>
</dbReference>
<dbReference type="Pfam" id="PF08264">
    <property type="entry name" value="Anticodon_1"/>
    <property type="match status" value="1"/>
</dbReference>
<dbReference type="Pfam" id="PF19302">
    <property type="entry name" value="DUF5915"/>
    <property type="match status" value="1"/>
</dbReference>
<dbReference type="Pfam" id="PF00133">
    <property type="entry name" value="tRNA-synt_1"/>
    <property type="match status" value="1"/>
</dbReference>
<dbReference type="PRINTS" id="PR00984">
    <property type="entry name" value="TRNASYNTHILE"/>
</dbReference>
<dbReference type="SUPFAM" id="SSF47323">
    <property type="entry name" value="Anticodon-binding domain of a subclass of class I aminoacyl-tRNA synthetases"/>
    <property type="match status" value="1"/>
</dbReference>
<dbReference type="SUPFAM" id="SSF52374">
    <property type="entry name" value="Nucleotidylyl transferase"/>
    <property type="match status" value="1"/>
</dbReference>
<dbReference type="SUPFAM" id="SSF50677">
    <property type="entry name" value="ValRS/IleRS/LeuRS editing domain"/>
    <property type="match status" value="1"/>
</dbReference>
<dbReference type="PROSITE" id="PS00178">
    <property type="entry name" value="AA_TRNA_LIGASE_I"/>
    <property type="match status" value="1"/>
</dbReference>
<feature type="chain" id="PRO_1000216256" description="Isoleucine--tRNA ligase">
    <location>
        <begin position="1"/>
        <end position="1092"/>
    </location>
</feature>
<feature type="short sequence motif" description="'HIGH' region">
    <location>
        <begin position="53"/>
        <end position="63"/>
    </location>
</feature>
<feature type="short sequence motif" description="'KMSKS' region">
    <location>
        <begin position="613"/>
        <end position="617"/>
    </location>
</feature>
<feature type="binding site" evidence="1">
    <location>
        <position position="616"/>
    </location>
    <ligand>
        <name>ATP</name>
        <dbReference type="ChEBI" id="CHEBI:30616"/>
    </ligand>
</feature>
<comment type="function">
    <text evidence="1">Catalyzes the attachment of isoleucine to tRNA(Ile). As IleRS can inadvertently accommodate and process structurally similar amino acids such as valine, to avoid such errors it has two additional distinct tRNA(Ile)-dependent editing activities. One activity is designated as 'pretransfer' editing and involves the hydrolysis of activated Val-AMP. The other activity is designated 'posttransfer' editing and involves deacylation of mischarged Val-tRNA(Ile).</text>
</comment>
<comment type="catalytic activity">
    <reaction evidence="1">
        <text>tRNA(Ile) + L-isoleucine + ATP = L-isoleucyl-tRNA(Ile) + AMP + diphosphate</text>
        <dbReference type="Rhea" id="RHEA:11060"/>
        <dbReference type="Rhea" id="RHEA-COMP:9666"/>
        <dbReference type="Rhea" id="RHEA-COMP:9695"/>
        <dbReference type="ChEBI" id="CHEBI:30616"/>
        <dbReference type="ChEBI" id="CHEBI:33019"/>
        <dbReference type="ChEBI" id="CHEBI:58045"/>
        <dbReference type="ChEBI" id="CHEBI:78442"/>
        <dbReference type="ChEBI" id="CHEBI:78528"/>
        <dbReference type="ChEBI" id="CHEBI:456215"/>
        <dbReference type="EC" id="6.1.1.5"/>
    </reaction>
</comment>
<comment type="cofactor">
    <cofactor evidence="1">
        <name>Zn(2+)</name>
        <dbReference type="ChEBI" id="CHEBI:29105"/>
    </cofactor>
</comment>
<comment type="subunit">
    <text evidence="1">Monomer.</text>
</comment>
<comment type="subcellular location">
    <subcellularLocation>
        <location evidence="1">Cytoplasm</location>
    </subcellularLocation>
</comment>
<comment type="domain">
    <text evidence="1">IleRS has two distinct active sites: one for aminoacylation and one for editing. The misactivated valine is translocated from the active site to the editing site, which sterically excludes the correctly activated isoleucine. The single editing site contains two valyl binding pockets, one specific for each substrate (Val-AMP or Val-tRNA(Ile)).</text>
</comment>
<comment type="similarity">
    <text evidence="1">Belongs to the class-I aminoacyl-tRNA synthetase family. IleS type 2 subfamily.</text>
</comment>
<sequence>MTNTKYYPEVNSNADFAGLEREILKFWQDNNIFQKSIDDRNGELEFIFYDGPPFANGLPHYGHLLTGFIKDVYARYQTIKGKKVERRFGWDCHGLPAEMQSEKELGISGRLAIANFGIEKFNAHCRASVMKYANDWEEYVTRQARWVNFKNSYKTMDKNFMESVLWAFKELYNKGLLYESMRVMPYSWACETPLSNFETRLDNSYRERADKAVTVSFVLSHPVATTTGSFKEYRILAWTTTPWTLPSNLALAVGSDIDYALVPKNDVCYIIAAYSVSKYAKELGLSGEENFEIIKGSALQGLNYKSLFDYFENHPNSFKIFAGDFVVEGDGTGVVHMAPGFGEDDQILCESKGIELVCPVDNSGKFTKEIPDLEGLQVFDANDKIIIKLKEQGNWLKTEQYIHNYPHCWRTDTPLIYKAVPSWYVKVTQFKDRMVELNQQINWIPFHVKDNLFGKWLENARDWSISRNRFWGTPLPVWKSDDPKYPRIDVYGSIEELEKDFGVKVTDLHRPFIDELTRPNPDDPTGKSTMRRIEDVFDCWFESGSMPYGQAHYPFENKEWFEDHFPADFIVEYSAQTRGWFYTLMVLSTALFDRPPFLNCICHGIILDSTGQKLSKRLNNYADPLELFDKYGSDALRVTMLSSNVVKGQELLIDKDGKMVFDTLRLFIKPIWNAYHFFTMYANTDSLKGKLNFSSKNVLDVYILSKLKIAVQKIEESLDNFDTQTAYHAVSEFFEVLNNWYIRRSRARFWKSEKDTDKQNAYNTLYSCLDTMAIAMSALVPMISEAIYKGLHHCEERNDTALSGKSNVIVRKDTSLDKAISGVSHKIATALSVPCNDAISVHLCNYPTLSDFEINHELVATMDNVLDICSNSLFIRSTENIRVRQPLASIAIISKHNNNLKDFEDLIKDEINVKAVIYRDDLENYASKKLSINFPMLGKRLPHKMKEIIAASKKGEWEAIAGGLAICGETLNSDEYKLVLEPYSHIKGAASFENNSSLLILDLELTPELIEEGYARDIVRFIQQARKDADFSITDRILIEIISEFNLSKIIDNYGDFIKEQTLGEFAKNFTPDYVSKVELENHQIQLKVKKS</sequence>
<accession>C3PP60</accession>
<gene>
    <name evidence="1" type="primary">ileS</name>
    <name type="ordered locus">RAF_ORF0859</name>
</gene>
<proteinExistence type="inferred from homology"/>
<evidence type="ECO:0000255" key="1">
    <source>
        <dbReference type="HAMAP-Rule" id="MF_02003"/>
    </source>
</evidence>
<keyword id="KW-0030">Aminoacyl-tRNA synthetase</keyword>
<keyword id="KW-0067">ATP-binding</keyword>
<keyword id="KW-0963">Cytoplasm</keyword>
<keyword id="KW-0436">Ligase</keyword>
<keyword id="KW-0479">Metal-binding</keyword>
<keyword id="KW-0547">Nucleotide-binding</keyword>
<keyword id="KW-0648">Protein biosynthesis</keyword>
<keyword id="KW-0862">Zinc</keyword>
<organism>
    <name type="scientific">Rickettsia africae (strain ESF-5)</name>
    <dbReference type="NCBI Taxonomy" id="347255"/>
    <lineage>
        <taxon>Bacteria</taxon>
        <taxon>Pseudomonadati</taxon>
        <taxon>Pseudomonadota</taxon>
        <taxon>Alphaproteobacteria</taxon>
        <taxon>Rickettsiales</taxon>
        <taxon>Rickettsiaceae</taxon>
        <taxon>Rickettsieae</taxon>
        <taxon>Rickettsia</taxon>
        <taxon>spotted fever group</taxon>
    </lineage>
</organism>